<sequence length="382" mass="41907">MRYLTAGESHGPKLVGILEGVPSGAKIDKETIDQALQERQKGPGRGGRMKIEKDQITILSGVRGGLTTGAPIALEIINRDWANWEKIMAWGDEADLESRKVMTPRPGHADLTGYLKYRTEVRNVLERASARETAMRVAIGNIAVQILEALGVEIRGQVLSVGKVHMDSEDTPEYWQRVQASEWKVGDPKGEEALDAQLQEARSQGESLGGVLQIQVRNLLPGLGSYVQWDRKLDGRLAQAVLSVQAIKGVAFGMGFTAGQHFGSEVHDPIGYDSGRGYYRYSNNAGGIEGGMTNGEPVIIEAVMKPIPTLYSPLSTVNLETKEVMEASVERSDVCAVPAALVVLKHVAAWEILQAILEKFPADTWDELDKAWQDYKRFVSEQ</sequence>
<gene>
    <name evidence="1" type="primary">aroC</name>
    <name type="ordered locus">Dhaf_3535</name>
</gene>
<dbReference type="EC" id="4.2.3.5" evidence="1"/>
<dbReference type="EMBL" id="CP001336">
    <property type="protein sequence ID" value="ACL21553.1"/>
    <property type="molecule type" value="Genomic_DNA"/>
</dbReference>
<dbReference type="RefSeq" id="WP_015944646.1">
    <property type="nucleotide sequence ID" value="NC_011830.1"/>
</dbReference>
<dbReference type="SMR" id="B8FQ92"/>
<dbReference type="KEGG" id="dhd:Dhaf_3535"/>
<dbReference type="HOGENOM" id="CLU_034547_2_0_9"/>
<dbReference type="UniPathway" id="UPA00053">
    <property type="reaction ID" value="UER00090"/>
</dbReference>
<dbReference type="Proteomes" id="UP000007726">
    <property type="component" value="Chromosome"/>
</dbReference>
<dbReference type="GO" id="GO:0005829">
    <property type="term" value="C:cytosol"/>
    <property type="evidence" value="ECO:0007669"/>
    <property type="project" value="TreeGrafter"/>
</dbReference>
<dbReference type="GO" id="GO:0004107">
    <property type="term" value="F:chorismate synthase activity"/>
    <property type="evidence" value="ECO:0007669"/>
    <property type="project" value="UniProtKB-UniRule"/>
</dbReference>
<dbReference type="GO" id="GO:0010181">
    <property type="term" value="F:FMN binding"/>
    <property type="evidence" value="ECO:0007669"/>
    <property type="project" value="TreeGrafter"/>
</dbReference>
<dbReference type="GO" id="GO:0008652">
    <property type="term" value="P:amino acid biosynthetic process"/>
    <property type="evidence" value="ECO:0007669"/>
    <property type="project" value="UniProtKB-KW"/>
</dbReference>
<dbReference type="GO" id="GO:0009073">
    <property type="term" value="P:aromatic amino acid family biosynthetic process"/>
    <property type="evidence" value="ECO:0007669"/>
    <property type="project" value="UniProtKB-KW"/>
</dbReference>
<dbReference type="GO" id="GO:0009423">
    <property type="term" value="P:chorismate biosynthetic process"/>
    <property type="evidence" value="ECO:0007669"/>
    <property type="project" value="UniProtKB-UniRule"/>
</dbReference>
<dbReference type="CDD" id="cd07304">
    <property type="entry name" value="Chorismate_synthase"/>
    <property type="match status" value="1"/>
</dbReference>
<dbReference type="FunFam" id="3.60.150.10:FF:000002">
    <property type="entry name" value="Chorismate synthase"/>
    <property type="match status" value="1"/>
</dbReference>
<dbReference type="Gene3D" id="3.60.150.10">
    <property type="entry name" value="Chorismate synthase AroC"/>
    <property type="match status" value="1"/>
</dbReference>
<dbReference type="HAMAP" id="MF_00300">
    <property type="entry name" value="Chorismate_synth"/>
    <property type="match status" value="1"/>
</dbReference>
<dbReference type="InterPro" id="IPR000453">
    <property type="entry name" value="Chorismate_synth"/>
</dbReference>
<dbReference type="InterPro" id="IPR035904">
    <property type="entry name" value="Chorismate_synth_AroC_sf"/>
</dbReference>
<dbReference type="InterPro" id="IPR020541">
    <property type="entry name" value="Chorismate_synthase_CS"/>
</dbReference>
<dbReference type="NCBIfam" id="TIGR00033">
    <property type="entry name" value="aroC"/>
    <property type="match status" value="1"/>
</dbReference>
<dbReference type="NCBIfam" id="NF003793">
    <property type="entry name" value="PRK05382.1"/>
    <property type="match status" value="1"/>
</dbReference>
<dbReference type="PANTHER" id="PTHR21085">
    <property type="entry name" value="CHORISMATE SYNTHASE"/>
    <property type="match status" value="1"/>
</dbReference>
<dbReference type="PANTHER" id="PTHR21085:SF0">
    <property type="entry name" value="CHORISMATE SYNTHASE"/>
    <property type="match status" value="1"/>
</dbReference>
<dbReference type="Pfam" id="PF01264">
    <property type="entry name" value="Chorismate_synt"/>
    <property type="match status" value="1"/>
</dbReference>
<dbReference type="PIRSF" id="PIRSF001456">
    <property type="entry name" value="Chorismate_synth"/>
    <property type="match status" value="1"/>
</dbReference>
<dbReference type="SUPFAM" id="SSF103263">
    <property type="entry name" value="Chorismate synthase, AroC"/>
    <property type="match status" value="1"/>
</dbReference>
<dbReference type="PROSITE" id="PS00787">
    <property type="entry name" value="CHORISMATE_SYNTHASE_1"/>
    <property type="match status" value="1"/>
</dbReference>
<organism>
    <name type="scientific">Desulfitobacterium hafniense (strain DSM 10664 / DCB-2)</name>
    <dbReference type="NCBI Taxonomy" id="272564"/>
    <lineage>
        <taxon>Bacteria</taxon>
        <taxon>Bacillati</taxon>
        <taxon>Bacillota</taxon>
        <taxon>Clostridia</taxon>
        <taxon>Eubacteriales</taxon>
        <taxon>Desulfitobacteriaceae</taxon>
        <taxon>Desulfitobacterium</taxon>
    </lineage>
</organism>
<reference key="1">
    <citation type="journal article" date="2012" name="BMC Microbiol.">
        <title>Genome sequence of Desulfitobacterium hafniense DCB-2, a Gram-positive anaerobe capable of dehalogenation and metal reduction.</title>
        <authorList>
            <person name="Kim S.H."/>
            <person name="Harzman C."/>
            <person name="Davis J.K."/>
            <person name="Hutcheson R."/>
            <person name="Broderick J.B."/>
            <person name="Marsh T.L."/>
            <person name="Tiedje J.M."/>
        </authorList>
    </citation>
    <scope>NUCLEOTIDE SEQUENCE [LARGE SCALE GENOMIC DNA]</scope>
    <source>
        <strain>DSM 10664 / DCB-2</strain>
    </source>
</reference>
<feature type="chain" id="PRO_1000132767" description="Chorismate synthase">
    <location>
        <begin position="1"/>
        <end position="382"/>
    </location>
</feature>
<feature type="binding site" evidence="1">
    <location>
        <position position="39"/>
    </location>
    <ligand>
        <name>NADP(+)</name>
        <dbReference type="ChEBI" id="CHEBI:58349"/>
    </ligand>
</feature>
<feature type="binding site" evidence="1">
    <location>
        <position position="45"/>
    </location>
    <ligand>
        <name>NADP(+)</name>
        <dbReference type="ChEBI" id="CHEBI:58349"/>
    </ligand>
</feature>
<feature type="binding site" evidence="1">
    <location>
        <begin position="127"/>
        <end position="129"/>
    </location>
    <ligand>
        <name>FMN</name>
        <dbReference type="ChEBI" id="CHEBI:58210"/>
    </ligand>
</feature>
<feature type="binding site" evidence="1">
    <location>
        <begin position="245"/>
        <end position="246"/>
    </location>
    <ligand>
        <name>FMN</name>
        <dbReference type="ChEBI" id="CHEBI:58210"/>
    </ligand>
</feature>
<feature type="binding site" evidence="1">
    <location>
        <position position="290"/>
    </location>
    <ligand>
        <name>FMN</name>
        <dbReference type="ChEBI" id="CHEBI:58210"/>
    </ligand>
</feature>
<feature type="binding site" evidence="1">
    <location>
        <begin position="305"/>
        <end position="309"/>
    </location>
    <ligand>
        <name>FMN</name>
        <dbReference type="ChEBI" id="CHEBI:58210"/>
    </ligand>
</feature>
<feature type="binding site" evidence="1">
    <location>
        <position position="331"/>
    </location>
    <ligand>
        <name>FMN</name>
        <dbReference type="ChEBI" id="CHEBI:58210"/>
    </ligand>
</feature>
<proteinExistence type="inferred from homology"/>
<accession>B8FQ92</accession>
<name>AROC_DESHD</name>
<comment type="function">
    <text evidence="1">Catalyzes the anti-1,4-elimination of the C-3 phosphate and the C-6 proR hydrogen from 5-enolpyruvylshikimate-3-phosphate (EPSP) to yield chorismate, which is the branch point compound that serves as the starting substrate for the three terminal pathways of aromatic amino acid biosynthesis. This reaction introduces a second double bond into the aromatic ring system.</text>
</comment>
<comment type="catalytic activity">
    <reaction evidence="1">
        <text>5-O-(1-carboxyvinyl)-3-phosphoshikimate = chorismate + phosphate</text>
        <dbReference type="Rhea" id="RHEA:21020"/>
        <dbReference type="ChEBI" id="CHEBI:29748"/>
        <dbReference type="ChEBI" id="CHEBI:43474"/>
        <dbReference type="ChEBI" id="CHEBI:57701"/>
        <dbReference type="EC" id="4.2.3.5"/>
    </reaction>
</comment>
<comment type="cofactor">
    <cofactor evidence="1">
        <name>FMNH2</name>
        <dbReference type="ChEBI" id="CHEBI:57618"/>
    </cofactor>
    <text evidence="1">Reduced FMN (FMNH(2)).</text>
</comment>
<comment type="pathway">
    <text evidence="1">Metabolic intermediate biosynthesis; chorismate biosynthesis; chorismate from D-erythrose 4-phosphate and phosphoenolpyruvate: step 7/7.</text>
</comment>
<comment type="subunit">
    <text evidence="1">Homotetramer.</text>
</comment>
<comment type="similarity">
    <text evidence="1">Belongs to the chorismate synthase family.</text>
</comment>
<protein>
    <recommendedName>
        <fullName evidence="1">Chorismate synthase</fullName>
        <shortName evidence="1">CS</shortName>
        <ecNumber evidence="1">4.2.3.5</ecNumber>
    </recommendedName>
    <alternativeName>
        <fullName evidence="1">5-enolpyruvylshikimate-3-phosphate phospholyase</fullName>
    </alternativeName>
</protein>
<evidence type="ECO:0000255" key="1">
    <source>
        <dbReference type="HAMAP-Rule" id="MF_00300"/>
    </source>
</evidence>
<keyword id="KW-0028">Amino-acid biosynthesis</keyword>
<keyword id="KW-0057">Aromatic amino acid biosynthesis</keyword>
<keyword id="KW-0274">FAD</keyword>
<keyword id="KW-0285">Flavoprotein</keyword>
<keyword id="KW-0288">FMN</keyword>
<keyword id="KW-0456">Lyase</keyword>
<keyword id="KW-0521">NADP</keyword>